<comment type="function">
    <text evidence="2 4">Plays a role in the coordination of growth and proliferation. Required for entry into G0 phase under conditions of carbon limitation. Involved in the general stress response; acts together with PSR1 to activate stress response element (STRE)-mediated gene expression, possibly through dephosphorylation of MSN2.</text>
</comment>
<comment type="subunit">
    <text evidence="2">Interacts with MSN2 and PSR1.</text>
</comment>
<comment type="interaction">
    <interactant intactId="EBI-20530">
        <id>P12611</id>
    </interactant>
    <interactant intactId="EBI-31129">
        <id>Q07800</id>
        <label>PSR1</label>
    </interactant>
    <organismsDiffer>false</organismsDiffer>
    <experiments>5</experiments>
</comment>
<comment type="disruption phenotype">
    <text evidence="4">Negative mutants fail to enter the G0 phase under conditions of carbon limitation.</text>
</comment>
<comment type="miscellaneous">
    <text evidence="3">Present with 1800 molecules/cell in log phase SD medium.</text>
</comment>
<comment type="similarity">
    <text evidence="5">Belongs to the WHI2 family.</text>
</comment>
<name>WHI2_YEAST</name>
<proteinExistence type="evidence at protein level"/>
<gene>
    <name type="primary">WHI2</name>
    <name type="ordered locus">YOR043W</name>
</gene>
<accession>P12611</accession>
<accession>D6W2A9</accession>
<accession>Q08413</accession>
<sequence>MDDIITQVSPDNAESAPILQEQQQQQNSQYEGNEEDYGDSLIHLNIQENHYFITRDQLMSLPESLLLCLFPSGVFLDRCGQVITNLTRDDEVYIVNFPPDCFEYIMEIYTKAHDDLYNHPVEKFFDRPSSSFVSNAKGFFGLSSNNSISSNNEQDILHQKPAIIVLREDLDYYCVPQEEFQFDSTNEENNEDLLRHFMAQVKMAAGSYLTSKTSIFQGLYSSNRLKQQQQQQKIEKGSNSSSNTKSTSKKLGPAEQHLMDMLCSSGFTKETCWGNRTQETGKTVISSLSLCRLANETTEGFRQKFNEAKAKWEAEHKPSQDNFITPMQSNISINSLSASKSNSTISTARNLTSGSTAPATARDKRKSRLSKLADNVRSHSSSRHSSQTRSKPPELPKLYDLVPKPNINAKLLLFWRKPARKCWWGEEDIELEVEVFGSWKDESKKIIELILPTNVDPEAELHKIIVPVRLHIRRVWTLELSVIGVQ</sequence>
<keyword id="KW-0131">Cell cycle</keyword>
<keyword id="KW-1185">Reference proteome</keyword>
<evidence type="ECO:0000256" key="1">
    <source>
        <dbReference type="SAM" id="MobiDB-lite"/>
    </source>
</evidence>
<evidence type="ECO:0000269" key="2">
    <source>
    </source>
</evidence>
<evidence type="ECO:0000269" key="3">
    <source>
    </source>
</evidence>
<evidence type="ECO:0000269" key="4">
    <source>
    </source>
</evidence>
<evidence type="ECO:0000305" key="5"/>
<dbReference type="EMBL" id="M21089">
    <property type="protein sequence ID" value="AAA35218.1"/>
    <property type="molecule type" value="Genomic_DNA"/>
</dbReference>
<dbReference type="EMBL" id="Z74951">
    <property type="protein sequence ID" value="CAA99234.1"/>
    <property type="molecule type" value="Genomic_DNA"/>
</dbReference>
<dbReference type="EMBL" id="BK006948">
    <property type="protein sequence ID" value="DAA10825.1"/>
    <property type="molecule type" value="Genomic_DNA"/>
</dbReference>
<dbReference type="PIR" id="S66917">
    <property type="entry name" value="COBYW2"/>
</dbReference>
<dbReference type="RefSeq" id="NP_014686.1">
    <property type="nucleotide sequence ID" value="NM_001183462.1"/>
</dbReference>
<dbReference type="BioGRID" id="34444">
    <property type="interactions" value="392"/>
</dbReference>
<dbReference type="ComplexPortal" id="CPX-1317">
    <property type="entry name" value="WHI2-PSR1 phosphatase complex"/>
</dbReference>
<dbReference type="ComplexPortal" id="CPX-1318">
    <property type="entry name" value="WHI2-PSR2 phosphatase complex"/>
</dbReference>
<dbReference type="DIP" id="DIP-2573N"/>
<dbReference type="FunCoup" id="P12611">
    <property type="interactions" value="127"/>
</dbReference>
<dbReference type="IntAct" id="P12611">
    <property type="interactions" value="14"/>
</dbReference>
<dbReference type="MINT" id="P12611"/>
<dbReference type="STRING" id="4932.YOR043W"/>
<dbReference type="CarbonylDB" id="P12611"/>
<dbReference type="GlyGen" id="P12611">
    <property type="glycosylation" value="3 sites, 1 O-linked glycan (3 sites)"/>
</dbReference>
<dbReference type="iPTMnet" id="P12611"/>
<dbReference type="PaxDb" id="4932-YOR043W"/>
<dbReference type="PeptideAtlas" id="P12611"/>
<dbReference type="EnsemblFungi" id="YOR043W_mRNA">
    <property type="protein sequence ID" value="YOR043W"/>
    <property type="gene ID" value="YOR043W"/>
</dbReference>
<dbReference type="GeneID" id="854208"/>
<dbReference type="KEGG" id="sce:YOR043W"/>
<dbReference type="AGR" id="SGD:S000005569"/>
<dbReference type="SGD" id="S000005569">
    <property type="gene designation" value="WHI2"/>
</dbReference>
<dbReference type="VEuPathDB" id="FungiDB:YOR043W"/>
<dbReference type="eggNOG" id="ENOG502RXS0">
    <property type="taxonomic scope" value="Eukaryota"/>
</dbReference>
<dbReference type="GeneTree" id="ENSGT00390000007074"/>
<dbReference type="HOGENOM" id="CLU_028899_0_1_1"/>
<dbReference type="InParanoid" id="P12611"/>
<dbReference type="OMA" id="RKCWWGE"/>
<dbReference type="OrthoDB" id="9451547at2759"/>
<dbReference type="BioCyc" id="YEAST:G3O-33587-MONOMER"/>
<dbReference type="BioGRID-ORCS" id="854208">
    <property type="hits" value="0 hits in 10 CRISPR screens"/>
</dbReference>
<dbReference type="PRO" id="PR:P12611"/>
<dbReference type="Proteomes" id="UP000002311">
    <property type="component" value="Chromosome XV"/>
</dbReference>
<dbReference type="RNAct" id="P12611">
    <property type="molecule type" value="protein"/>
</dbReference>
<dbReference type="GO" id="GO:0071944">
    <property type="term" value="C:cell periphery"/>
    <property type="evidence" value="ECO:0007005"/>
    <property type="project" value="SGD"/>
</dbReference>
<dbReference type="GO" id="GO:0005634">
    <property type="term" value="C:nucleus"/>
    <property type="evidence" value="ECO:0000318"/>
    <property type="project" value="GO_Central"/>
</dbReference>
<dbReference type="GO" id="GO:1903293">
    <property type="term" value="C:phosphatase complex"/>
    <property type="evidence" value="ECO:0000314"/>
    <property type="project" value="UniProtKB"/>
</dbReference>
<dbReference type="GO" id="GO:0019903">
    <property type="term" value="F:protein phosphatase binding"/>
    <property type="evidence" value="ECO:0000314"/>
    <property type="project" value="SGD"/>
</dbReference>
<dbReference type="GO" id="GO:0003723">
    <property type="term" value="F:RNA binding"/>
    <property type="evidence" value="ECO:0000318"/>
    <property type="project" value="GO_Central"/>
</dbReference>
<dbReference type="GO" id="GO:0007015">
    <property type="term" value="P:actin filament organization"/>
    <property type="evidence" value="ECO:0000315"/>
    <property type="project" value="SGD"/>
</dbReference>
<dbReference type="GO" id="GO:0071474">
    <property type="term" value="P:cellular hyperosmotic response"/>
    <property type="evidence" value="ECO:0000315"/>
    <property type="project" value="SGD"/>
</dbReference>
<dbReference type="GO" id="GO:0034198">
    <property type="term" value="P:cellular response to amino acid starvation"/>
    <property type="evidence" value="ECO:0000315"/>
    <property type="project" value="SGD"/>
</dbReference>
<dbReference type="GO" id="GO:0034605">
    <property type="term" value="P:cellular response to heat"/>
    <property type="evidence" value="ECO:0000315"/>
    <property type="project" value="SGD"/>
</dbReference>
<dbReference type="GO" id="GO:0034599">
    <property type="term" value="P:cellular response to oxidative stress"/>
    <property type="evidence" value="ECO:0000315"/>
    <property type="project" value="SGD"/>
</dbReference>
<dbReference type="GO" id="GO:0006897">
    <property type="term" value="P:endocytosis"/>
    <property type="evidence" value="ECO:0000315"/>
    <property type="project" value="SGD"/>
</dbReference>
<dbReference type="GO" id="GO:0000423">
    <property type="term" value="P:mitophagy"/>
    <property type="evidence" value="ECO:0000315"/>
    <property type="project" value="SGD"/>
</dbReference>
<dbReference type="GO" id="GO:1904262">
    <property type="term" value="P:negative regulation of TORC1 signaling"/>
    <property type="evidence" value="ECO:0000315"/>
    <property type="project" value="SGD"/>
</dbReference>
<dbReference type="GO" id="GO:1903452">
    <property type="term" value="P:positive regulation of G1 to G0 transition"/>
    <property type="evidence" value="ECO:0000315"/>
    <property type="project" value="SGD"/>
</dbReference>
<dbReference type="GO" id="GO:0010628">
    <property type="term" value="P:positive regulation of gene expression"/>
    <property type="evidence" value="ECO:0000315"/>
    <property type="project" value="UniProtKB"/>
</dbReference>
<dbReference type="GO" id="GO:0045944">
    <property type="term" value="P:positive regulation of transcription by RNA polymerase II"/>
    <property type="evidence" value="ECO:0000315"/>
    <property type="project" value="SGD"/>
</dbReference>
<dbReference type="GO" id="GO:0006470">
    <property type="term" value="P:protein dephosphorylation"/>
    <property type="evidence" value="ECO:0000315"/>
    <property type="project" value="UniProtKB"/>
</dbReference>
<dbReference type="GO" id="GO:0009408">
    <property type="term" value="P:response to heat"/>
    <property type="evidence" value="ECO:0000315"/>
    <property type="project" value="UniProtKB"/>
</dbReference>
<dbReference type="GO" id="GO:0042542">
    <property type="term" value="P:response to hydrogen peroxide"/>
    <property type="evidence" value="ECO:0000315"/>
    <property type="project" value="UniProtKB"/>
</dbReference>
<dbReference type="GO" id="GO:0009651">
    <property type="term" value="P:response to salt stress"/>
    <property type="evidence" value="ECO:0000315"/>
    <property type="project" value="UniProtKB"/>
</dbReference>
<dbReference type="Gene3D" id="3.30.710.10">
    <property type="entry name" value="Potassium Channel Kv1.1, Chain A"/>
    <property type="match status" value="1"/>
</dbReference>
<dbReference type="InterPro" id="IPR011333">
    <property type="entry name" value="SKP1/BTB/POZ_sf"/>
</dbReference>
<dbReference type="SUPFAM" id="SSF54695">
    <property type="entry name" value="POZ domain"/>
    <property type="match status" value="1"/>
</dbReference>
<reference key="1">
    <citation type="journal article" date="1988" name="Gene">
        <title>Transcript characterisation, gene disruption and nucleotide sequence of the Saccharomyces cerevisiae WH12 gene.</title>
        <authorList>
            <person name="Kelly D.E."/>
            <person name="Trevethick J."/>
            <person name="Mountain H."/>
            <person name="Sudbery P.E."/>
        </authorList>
    </citation>
    <scope>NUCLEOTIDE SEQUENCE [GENOMIC DNA]</scope>
    <scope>FUNCTION</scope>
    <scope>DISRUPTION PHENOTYPE</scope>
</reference>
<reference key="2">
    <citation type="journal article" date="1997" name="Nature">
        <title>The nucleotide sequence of Saccharomyces cerevisiae chromosome XV.</title>
        <authorList>
            <person name="Dujon B."/>
            <person name="Albermann K."/>
            <person name="Aldea M."/>
            <person name="Alexandraki D."/>
            <person name="Ansorge W."/>
            <person name="Arino J."/>
            <person name="Benes V."/>
            <person name="Bohn C."/>
            <person name="Bolotin-Fukuhara M."/>
            <person name="Bordonne R."/>
            <person name="Boyer J."/>
            <person name="Camasses A."/>
            <person name="Casamayor A."/>
            <person name="Casas C."/>
            <person name="Cheret G."/>
            <person name="Cziepluch C."/>
            <person name="Daignan-Fornier B."/>
            <person name="Dang V.-D."/>
            <person name="de Haan M."/>
            <person name="Delius H."/>
            <person name="Durand P."/>
            <person name="Fairhead C."/>
            <person name="Feldmann H."/>
            <person name="Gaillon L."/>
            <person name="Galisson F."/>
            <person name="Gamo F.-J."/>
            <person name="Gancedo C."/>
            <person name="Goffeau A."/>
            <person name="Goulding S.E."/>
            <person name="Grivell L.A."/>
            <person name="Habbig B."/>
            <person name="Hand N.J."/>
            <person name="Hani J."/>
            <person name="Hattenhorst U."/>
            <person name="Hebling U."/>
            <person name="Hernando Y."/>
            <person name="Herrero E."/>
            <person name="Heumann K."/>
            <person name="Hiesel R."/>
            <person name="Hilger F."/>
            <person name="Hofmann B."/>
            <person name="Hollenberg C.P."/>
            <person name="Hughes B."/>
            <person name="Jauniaux J.-C."/>
            <person name="Kalogeropoulos A."/>
            <person name="Katsoulou C."/>
            <person name="Kordes E."/>
            <person name="Lafuente M.J."/>
            <person name="Landt O."/>
            <person name="Louis E.J."/>
            <person name="Maarse A.C."/>
            <person name="Madania A."/>
            <person name="Mannhaupt G."/>
            <person name="Marck C."/>
            <person name="Martin R.P."/>
            <person name="Mewes H.-W."/>
            <person name="Michaux G."/>
            <person name="Paces V."/>
            <person name="Parle-McDermott A.G."/>
            <person name="Pearson B.M."/>
            <person name="Perrin A."/>
            <person name="Pettersson B."/>
            <person name="Poch O."/>
            <person name="Pohl T.M."/>
            <person name="Poirey R."/>
            <person name="Portetelle D."/>
            <person name="Pujol A."/>
            <person name="Purnelle B."/>
            <person name="Ramezani Rad M."/>
            <person name="Rechmann S."/>
            <person name="Schwager C."/>
            <person name="Schweizer M."/>
            <person name="Sor F."/>
            <person name="Sterky F."/>
            <person name="Tarassov I.A."/>
            <person name="Teodoru C."/>
            <person name="Tettelin H."/>
            <person name="Thierry A."/>
            <person name="Tobiasch E."/>
            <person name="Tzermia M."/>
            <person name="Uhlen M."/>
            <person name="Unseld M."/>
            <person name="Valens M."/>
            <person name="Vandenbol M."/>
            <person name="Vetter I."/>
            <person name="Vlcek C."/>
            <person name="Voet M."/>
            <person name="Volckaert G."/>
            <person name="Voss H."/>
            <person name="Wambutt R."/>
            <person name="Wedler H."/>
            <person name="Wiemann S."/>
            <person name="Winsor B."/>
            <person name="Wolfe K.H."/>
            <person name="Zollner A."/>
            <person name="Zumstein E."/>
            <person name="Kleine K."/>
        </authorList>
    </citation>
    <scope>NUCLEOTIDE SEQUENCE [LARGE SCALE GENOMIC DNA]</scope>
    <source>
        <strain>ATCC 204508 / S288c</strain>
    </source>
</reference>
<reference key="3">
    <citation type="journal article" date="2014" name="G3 (Bethesda)">
        <title>The reference genome sequence of Saccharomyces cerevisiae: Then and now.</title>
        <authorList>
            <person name="Engel S.R."/>
            <person name="Dietrich F.S."/>
            <person name="Fisk D.G."/>
            <person name="Binkley G."/>
            <person name="Balakrishnan R."/>
            <person name="Costanzo M.C."/>
            <person name="Dwight S.S."/>
            <person name="Hitz B.C."/>
            <person name="Karra K."/>
            <person name="Nash R.S."/>
            <person name="Weng S."/>
            <person name="Wong E.D."/>
            <person name="Lloyd P."/>
            <person name="Skrzypek M.S."/>
            <person name="Miyasato S.R."/>
            <person name="Simison M."/>
            <person name="Cherry J.M."/>
        </authorList>
    </citation>
    <scope>GENOME REANNOTATION</scope>
    <source>
        <strain>ATCC 204508 / S288c</strain>
    </source>
</reference>
<reference key="4">
    <citation type="journal article" date="2002" name="Genes Cells">
        <title>Yeast Whi2 and Psr1-phosphatase form a complex and regulate STRE-mediated gene expression.</title>
        <authorList>
            <person name="Kaida D."/>
            <person name="Yashiroda H."/>
            <person name="Toh-e A."/>
            <person name="Kikuchi Y."/>
        </authorList>
    </citation>
    <scope>FUNCTION</scope>
    <scope>INTERACTION WITH PSR1 AND MSN2</scope>
</reference>
<reference key="5">
    <citation type="journal article" date="2003" name="Nature">
        <title>Global analysis of protein expression in yeast.</title>
        <authorList>
            <person name="Ghaemmaghami S."/>
            <person name="Huh W.-K."/>
            <person name="Bower K."/>
            <person name="Howson R.W."/>
            <person name="Belle A."/>
            <person name="Dephoure N."/>
            <person name="O'Shea E.K."/>
            <person name="Weissman J.S."/>
        </authorList>
    </citation>
    <scope>LEVEL OF PROTEIN EXPRESSION [LARGE SCALE ANALYSIS]</scope>
</reference>
<reference key="6">
    <citation type="journal article" date="2008" name="Mol. Cell. Proteomics">
        <title>A multidimensional chromatography technology for in-depth phosphoproteome analysis.</title>
        <authorList>
            <person name="Albuquerque C.P."/>
            <person name="Smolka M.B."/>
            <person name="Payne S.H."/>
            <person name="Bafna V."/>
            <person name="Eng J."/>
            <person name="Zhou H."/>
        </authorList>
    </citation>
    <scope>IDENTIFICATION BY MASS SPECTROMETRY [LARGE SCALE ANALYSIS]</scope>
</reference>
<organism>
    <name type="scientific">Saccharomyces cerevisiae (strain ATCC 204508 / S288c)</name>
    <name type="common">Baker's yeast</name>
    <dbReference type="NCBI Taxonomy" id="559292"/>
    <lineage>
        <taxon>Eukaryota</taxon>
        <taxon>Fungi</taxon>
        <taxon>Dikarya</taxon>
        <taxon>Ascomycota</taxon>
        <taxon>Saccharomycotina</taxon>
        <taxon>Saccharomycetes</taxon>
        <taxon>Saccharomycetales</taxon>
        <taxon>Saccharomycetaceae</taxon>
        <taxon>Saccharomyces</taxon>
    </lineage>
</organism>
<protein>
    <recommendedName>
        <fullName>Growth regulation protein</fullName>
    </recommendedName>
</protein>
<feature type="chain" id="PRO_0000065967" description="Growth regulation protein">
    <location>
        <begin position="1"/>
        <end position="486"/>
    </location>
</feature>
<feature type="region of interest" description="Disordered" evidence="1">
    <location>
        <begin position="1"/>
        <end position="34"/>
    </location>
</feature>
<feature type="region of interest" description="Disordered" evidence="1">
    <location>
        <begin position="227"/>
        <end position="253"/>
    </location>
</feature>
<feature type="region of interest" description="Disordered" evidence="1">
    <location>
        <begin position="345"/>
        <end position="397"/>
    </location>
</feature>
<feature type="compositionally biased region" description="Polar residues" evidence="1">
    <location>
        <begin position="1"/>
        <end position="12"/>
    </location>
</feature>
<feature type="compositionally biased region" description="Low complexity" evidence="1">
    <location>
        <begin position="20"/>
        <end position="31"/>
    </location>
</feature>
<feature type="compositionally biased region" description="Low complexity" evidence="1">
    <location>
        <begin position="227"/>
        <end position="250"/>
    </location>
</feature>
<feature type="compositionally biased region" description="Polar residues" evidence="1">
    <location>
        <begin position="347"/>
        <end position="358"/>
    </location>
</feature>
<feature type="sequence conflict" description="In Ref. 1; AAA35218." evidence="5" ref="1">
    <original>F</original>
    <variation>L</variation>
    <location>
        <position position="216"/>
    </location>
</feature>